<organism>
    <name type="scientific">Solibacter usitatus (strain Ellin6076)</name>
    <dbReference type="NCBI Taxonomy" id="234267"/>
    <lineage>
        <taxon>Bacteria</taxon>
        <taxon>Pseudomonadati</taxon>
        <taxon>Acidobacteriota</taxon>
        <taxon>Terriglobia</taxon>
        <taxon>Bryobacterales</taxon>
        <taxon>Solibacteraceae</taxon>
        <taxon>Candidatus Solibacter</taxon>
    </lineage>
</organism>
<protein>
    <recommendedName>
        <fullName evidence="1">Large ribosomal subunit protein uL11</fullName>
    </recommendedName>
    <alternativeName>
        <fullName evidence="2">50S ribosomal protein L11</fullName>
    </alternativeName>
</protein>
<evidence type="ECO:0000255" key="1">
    <source>
        <dbReference type="HAMAP-Rule" id="MF_00736"/>
    </source>
</evidence>
<evidence type="ECO:0000305" key="2"/>
<proteinExistence type="inferred from homology"/>
<comment type="function">
    <text evidence="1">Forms part of the ribosomal stalk which helps the ribosome interact with GTP-bound translation factors.</text>
</comment>
<comment type="subunit">
    <text evidence="1">Part of the ribosomal stalk of the 50S ribosomal subunit. Interacts with L10 and the large rRNA to form the base of the stalk. L10 forms an elongated spine to which L12 dimers bind in a sequential fashion forming a multimeric L10(L12)X complex.</text>
</comment>
<comment type="PTM">
    <text evidence="1">One or more lysine residues are methylated.</text>
</comment>
<comment type="similarity">
    <text evidence="1">Belongs to the universal ribosomal protein uL11 family.</text>
</comment>
<accession>Q01SW8</accession>
<keyword id="KW-0488">Methylation</keyword>
<keyword id="KW-0687">Ribonucleoprotein</keyword>
<keyword id="KW-0689">Ribosomal protein</keyword>
<keyword id="KW-0694">RNA-binding</keyword>
<keyword id="KW-0699">rRNA-binding</keyword>
<sequence>MAKKVTAQVKLQIPAGKATPAPPVGTALGPQGVNIMDFCKAYNAKTSGKDQEGLIIPVVITIYSDRSFTFITKTPPVPVLIKRAVAIAKGSPEPHKTKVGKITQAQVEEIAKIKLPDLNCFDLDAAMRSVRGTARSMGVDVV</sequence>
<gene>
    <name evidence="1" type="primary">rplK</name>
    <name type="ordered locus">Acid_6326</name>
</gene>
<feature type="chain" id="PRO_1000046271" description="Large ribosomal subunit protein uL11">
    <location>
        <begin position="1"/>
        <end position="142"/>
    </location>
</feature>
<name>RL11_SOLUE</name>
<dbReference type="EMBL" id="CP000473">
    <property type="protein sequence ID" value="ABJ87252.1"/>
    <property type="molecule type" value="Genomic_DNA"/>
</dbReference>
<dbReference type="SMR" id="Q01SW8"/>
<dbReference type="FunCoup" id="Q01SW8">
    <property type="interactions" value="720"/>
</dbReference>
<dbReference type="STRING" id="234267.Acid_6326"/>
<dbReference type="KEGG" id="sus:Acid_6326"/>
<dbReference type="eggNOG" id="COG0080">
    <property type="taxonomic scope" value="Bacteria"/>
</dbReference>
<dbReference type="HOGENOM" id="CLU_074237_2_1_0"/>
<dbReference type="InParanoid" id="Q01SW8"/>
<dbReference type="OrthoDB" id="9802408at2"/>
<dbReference type="GO" id="GO:0022625">
    <property type="term" value="C:cytosolic large ribosomal subunit"/>
    <property type="evidence" value="ECO:0007669"/>
    <property type="project" value="TreeGrafter"/>
</dbReference>
<dbReference type="GO" id="GO:0070180">
    <property type="term" value="F:large ribosomal subunit rRNA binding"/>
    <property type="evidence" value="ECO:0007669"/>
    <property type="project" value="UniProtKB-UniRule"/>
</dbReference>
<dbReference type="GO" id="GO:0003735">
    <property type="term" value="F:structural constituent of ribosome"/>
    <property type="evidence" value="ECO:0007669"/>
    <property type="project" value="InterPro"/>
</dbReference>
<dbReference type="GO" id="GO:0006412">
    <property type="term" value="P:translation"/>
    <property type="evidence" value="ECO:0007669"/>
    <property type="project" value="UniProtKB-UniRule"/>
</dbReference>
<dbReference type="CDD" id="cd00349">
    <property type="entry name" value="Ribosomal_L11"/>
    <property type="match status" value="1"/>
</dbReference>
<dbReference type="FunFam" id="1.10.10.250:FF:000001">
    <property type="entry name" value="50S ribosomal protein L11"/>
    <property type="match status" value="1"/>
</dbReference>
<dbReference type="FunFam" id="3.30.1550.10:FF:000001">
    <property type="entry name" value="50S ribosomal protein L11"/>
    <property type="match status" value="1"/>
</dbReference>
<dbReference type="Gene3D" id="1.10.10.250">
    <property type="entry name" value="Ribosomal protein L11, C-terminal domain"/>
    <property type="match status" value="1"/>
</dbReference>
<dbReference type="Gene3D" id="3.30.1550.10">
    <property type="entry name" value="Ribosomal protein L11/L12, N-terminal domain"/>
    <property type="match status" value="1"/>
</dbReference>
<dbReference type="HAMAP" id="MF_00736">
    <property type="entry name" value="Ribosomal_uL11"/>
    <property type="match status" value="1"/>
</dbReference>
<dbReference type="InterPro" id="IPR000911">
    <property type="entry name" value="Ribosomal_uL11"/>
</dbReference>
<dbReference type="InterPro" id="IPR006519">
    <property type="entry name" value="Ribosomal_uL11_bac-typ"/>
</dbReference>
<dbReference type="InterPro" id="IPR020783">
    <property type="entry name" value="Ribosomal_uL11_C"/>
</dbReference>
<dbReference type="InterPro" id="IPR036769">
    <property type="entry name" value="Ribosomal_uL11_C_sf"/>
</dbReference>
<dbReference type="InterPro" id="IPR020784">
    <property type="entry name" value="Ribosomal_uL11_N"/>
</dbReference>
<dbReference type="InterPro" id="IPR036796">
    <property type="entry name" value="Ribosomal_uL11_N_sf"/>
</dbReference>
<dbReference type="NCBIfam" id="TIGR01632">
    <property type="entry name" value="L11_bact"/>
    <property type="match status" value="1"/>
</dbReference>
<dbReference type="PANTHER" id="PTHR11661">
    <property type="entry name" value="60S RIBOSOMAL PROTEIN L12"/>
    <property type="match status" value="1"/>
</dbReference>
<dbReference type="PANTHER" id="PTHR11661:SF1">
    <property type="entry name" value="LARGE RIBOSOMAL SUBUNIT PROTEIN UL11M"/>
    <property type="match status" value="1"/>
</dbReference>
<dbReference type="Pfam" id="PF00298">
    <property type="entry name" value="Ribosomal_L11"/>
    <property type="match status" value="1"/>
</dbReference>
<dbReference type="Pfam" id="PF03946">
    <property type="entry name" value="Ribosomal_L11_N"/>
    <property type="match status" value="1"/>
</dbReference>
<dbReference type="SMART" id="SM00649">
    <property type="entry name" value="RL11"/>
    <property type="match status" value="1"/>
</dbReference>
<dbReference type="SUPFAM" id="SSF54747">
    <property type="entry name" value="Ribosomal L11/L12e N-terminal domain"/>
    <property type="match status" value="1"/>
</dbReference>
<dbReference type="SUPFAM" id="SSF46906">
    <property type="entry name" value="Ribosomal protein L11, C-terminal domain"/>
    <property type="match status" value="1"/>
</dbReference>
<reference key="1">
    <citation type="journal article" date="2009" name="Appl. Environ. Microbiol.">
        <title>Three genomes from the phylum Acidobacteria provide insight into the lifestyles of these microorganisms in soils.</title>
        <authorList>
            <person name="Ward N.L."/>
            <person name="Challacombe J.F."/>
            <person name="Janssen P.H."/>
            <person name="Henrissat B."/>
            <person name="Coutinho P.M."/>
            <person name="Wu M."/>
            <person name="Xie G."/>
            <person name="Haft D.H."/>
            <person name="Sait M."/>
            <person name="Badger J."/>
            <person name="Barabote R.D."/>
            <person name="Bradley B."/>
            <person name="Brettin T.S."/>
            <person name="Brinkac L.M."/>
            <person name="Bruce D."/>
            <person name="Creasy T."/>
            <person name="Daugherty S.C."/>
            <person name="Davidsen T.M."/>
            <person name="DeBoy R.T."/>
            <person name="Detter J.C."/>
            <person name="Dodson R.J."/>
            <person name="Durkin A.S."/>
            <person name="Ganapathy A."/>
            <person name="Gwinn-Giglio M."/>
            <person name="Han C.S."/>
            <person name="Khouri H."/>
            <person name="Kiss H."/>
            <person name="Kothari S.P."/>
            <person name="Madupu R."/>
            <person name="Nelson K.E."/>
            <person name="Nelson W.C."/>
            <person name="Paulsen I."/>
            <person name="Penn K."/>
            <person name="Ren Q."/>
            <person name="Rosovitz M.J."/>
            <person name="Selengut J.D."/>
            <person name="Shrivastava S."/>
            <person name="Sullivan S.A."/>
            <person name="Tapia R."/>
            <person name="Thompson L.S."/>
            <person name="Watkins K.L."/>
            <person name="Yang Q."/>
            <person name="Yu C."/>
            <person name="Zafar N."/>
            <person name="Zhou L."/>
            <person name="Kuske C.R."/>
        </authorList>
    </citation>
    <scope>NUCLEOTIDE SEQUENCE [LARGE SCALE GENOMIC DNA]</scope>
    <source>
        <strain>Ellin6076</strain>
    </source>
</reference>